<gene>
    <name evidence="1" type="primary">chlN</name>
</gene>
<feature type="chain" id="PRO_0000324036" description="Light-independent protochlorophyllide reductase subunit N">
    <location>
        <begin position="1"/>
        <end position="454"/>
    </location>
</feature>
<feature type="binding site" evidence="1">
    <location>
        <position position="22"/>
    </location>
    <ligand>
        <name>[4Fe-4S] cluster</name>
        <dbReference type="ChEBI" id="CHEBI:49883"/>
        <note>ligand shared with heterodimeric partner</note>
    </ligand>
</feature>
<feature type="binding site" evidence="1">
    <location>
        <position position="47"/>
    </location>
    <ligand>
        <name>[4Fe-4S] cluster</name>
        <dbReference type="ChEBI" id="CHEBI:49883"/>
        <note>ligand shared with heterodimeric partner</note>
    </ligand>
</feature>
<feature type="binding site" evidence="1">
    <location>
        <position position="107"/>
    </location>
    <ligand>
        <name>[4Fe-4S] cluster</name>
        <dbReference type="ChEBI" id="CHEBI:49883"/>
        <note>ligand shared with heterodimeric partner</note>
    </ligand>
</feature>
<geneLocation type="chloroplast"/>
<keyword id="KW-0004">4Fe-4S</keyword>
<keyword id="KW-0067">ATP-binding</keyword>
<keyword id="KW-0149">Chlorophyll biosynthesis</keyword>
<keyword id="KW-0150">Chloroplast</keyword>
<keyword id="KW-0408">Iron</keyword>
<keyword id="KW-0411">Iron-sulfur</keyword>
<keyword id="KW-0479">Metal-binding</keyword>
<keyword id="KW-0547">Nucleotide-binding</keyword>
<keyword id="KW-0560">Oxidoreductase</keyword>
<keyword id="KW-0602">Photosynthesis</keyword>
<keyword id="KW-0934">Plastid</keyword>
<reference key="1">
    <citation type="journal article" date="2007" name="Mol. Biol. Evol.">
        <title>Chloroplast genome (cpDNA) of Cycas taitungensis and 56 cp protein-coding genes of Gnetum parvifolium: insights into cpDNA evolution and phylogeny of extant seed plants.</title>
        <authorList>
            <person name="Wu C.-S."/>
            <person name="Wang Y.-N."/>
            <person name="Liu S.-M."/>
            <person name="Chaw S.-M."/>
        </authorList>
    </citation>
    <scope>NUCLEOTIDE SEQUENCE [LARGE SCALE GENOMIC DNA]</scope>
</reference>
<dbReference type="EC" id="1.3.7.7" evidence="1"/>
<dbReference type="EMBL" id="AP009339">
    <property type="protein sequence ID" value="BAF65017.1"/>
    <property type="molecule type" value="Genomic_DNA"/>
</dbReference>
<dbReference type="RefSeq" id="YP_001312275.1">
    <property type="nucleotide sequence ID" value="NC_009618.1"/>
</dbReference>
<dbReference type="SMR" id="A6H5Q1"/>
<dbReference type="GeneID" id="5309475"/>
<dbReference type="UniPathway" id="UPA00670"/>
<dbReference type="GO" id="GO:0009507">
    <property type="term" value="C:chloroplast"/>
    <property type="evidence" value="ECO:0007669"/>
    <property type="project" value="UniProtKB-SubCell"/>
</dbReference>
<dbReference type="GO" id="GO:0051539">
    <property type="term" value="F:4 iron, 4 sulfur cluster binding"/>
    <property type="evidence" value="ECO:0007669"/>
    <property type="project" value="UniProtKB-UniRule"/>
</dbReference>
<dbReference type="GO" id="GO:0005524">
    <property type="term" value="F:ATP binding"/>
    <property type="evidence" value="ECO:0007669"/>
    <property type="project" value="UniProtKB-UniRule"/>
</dbReference>
<dbReference type="GO" id="GO:0046872">
    <property type="term" value="F:metal ion binding"/>
    <property type="evidence" value="ECO:0007669"/>
    <property type="project" value="UniProtKB-KW"/>
</dbReference>
<dbReference type="GO" id="GO:0016730">
    <property type="term" value="F:oxidoreductase activity, acting on iron-sulfur proteins as donors"/>
    <property type="evidence" value="ECO:0007669"/>
    <property type="project" value="InterPro"/>
</dbReference>
<dbReference type="GO" id="GO:0016636">
    <property type="term" value="F:oxidoreductase activity, acting on the CH-CH group of donors, iron-sulfur protein as acceptor"/>
    <property type="evidence" value="ECO:0007669"/>
    <property type="project" value="UniProtKB-UniRule"/>
</dbReference>
<dbReference type="GO" id="GO:0036068">
    <property type="term" value="P:light-independent chlorophyll biosynthetic process"/>
    <property type="evidence" value="ECO:0007669"/>
    <property type="project" value="UniProtKB-UniRule"/>
</dbReference>
<dbReference type="GO" id="GO:0019685">
    <property type="term" value="P:photosynthesis, dark reaction"/>
    <property type="evidence" value="ECO:0007669"/>
    <property type="project" value="InterPro"/>
</dbReference>
<dbReference type="CDD" id="cd01979">
    <property type="entry name" value="Pchlide_reductase_N"/>
    <property type="match status" value="1"/>
</dbReference>
<dbReference type="Gene3D" id="3.40.50.1980">
    <property type="entry name" value="Nitrogenase molybdenum iron protein domain"/>
    <property type="match status" value="3"/>
</dbReference>
<dbReference type="HAMAP" id="MF_00352">
    <property type="entry name" value="ChlN_BchN"/>
    <property type="match status" value="1"/>
</dbReference>
<dbReference type="InterPro" id="IPR050293">
    <property type="entry name" value="LIPOR_BchN/ChlN"/>
</dbReference>
<dbReference type="InterPro" id="IPR000510">
    <property type="entry name" value="Nase/OxRdtase_comp1"/>
</dbReference>
<dbReference type="InterPro" id="IPR005970">
    <property type="entry name" value="Protochl_reductN"/>
</dbReference>
<dbReference type="NCBIfam" id="TIGR01279">
    <property type="entry name" value="DPOR_bchN"/>
    <property type="match status" value="1"/>
</dbReference>
<dbReference type="NCBIfam" id="NF002768">
    <property type="entry name" value="PRK02842.1"/>
    <property type="match status" value="1"/>
</dbReference>
<dbReference type="PANTHER" id="PTHR39429">
    <property type="entry name" value="LIGHT-INDEPENDENT PROTOCHLOROPHYLLIDE REDUCTASE SUBUNIT N"/>
    <property type="match status" value="1"/>
</dbReference>
<dbReference type="PANTHER" id="PTHR39429:SF3">
    <property type="entry name" value="LIGHT-INDEPENDENT PROTOCHLOROPHYLLIDE REDUCTASE SUBUNIT N"/>
    <property type="match status" value="1"/>
</dbReference>
<dbReference type="Pfam" id="PF00148">
    <property type="entry name" value="Oxidored_nitro"/>
    <property type="match status" value="1"/>
</dbReference>
<dbReference type="PIRSF" id="PIRSF000162">
    <property type="entry name" value="P_chlorophyll_rd"/>
    <property type="match status" value="1"/>
</dbReference>
<dbReference type="SUPFAM" id="SSF53807">
    <property type="entry name" value="Helical backbone' metal receptor"/>
    <property type="match status" value="1"/>
</dbReference>
<accession>A6H5Q1</accession>
<proteinExistence type="inferred from homology"/>
<organism>
    <name type="scientific">Cycas taitungensis</name>
    <name type="common">Prince sago</name>
    <name type="synonym">Cycas taiwaniana</name>
    <dbReference type="NCBI Taxonomy" id="54799"/>
    <lineage>
        <taxon>Eukaryota</taxon>
        <taxon>Viridiplantae</taxon>
        <taxon>Streptophyta</taxon>
        <taxon>Embryophyta</taxon>
        <taxon>Tracheophyta</taxon>
        <taxon>Spermatophyta</taxon>
        <taxon>Cycadidae</taxon>
        <taxon>Cycadales</taxon>
        <taxon>Cycadaceae</taxon>
        <taxon>Cycas</taxon>
    </lineage>
</organism>
<comment type="function">
    <text evidence="1">Component of the dark-operative protochlorophyllide reductase (DPOR) that uses Mg-ATP and reduced ferredoxin to reduce ring D of protochlorophyllide (Pchlide) to form chlorophyllide a (Chlide). This reaction is light-independent. The NB-protein (ChlN-ChlB) is the catalytic component of the complex.</text>
</comment>
<comment type="catalytic activity">
    <reaction evidence="1">
        <text>chlorophyllide a + oxidized 2[4Fe-4S]-[ferredoxin] + 2 ADP + 2 phosphate = protochlorophyllide a + reduced 2[4Fe-4S]-[ferredoxin] + 2 ATP + 2 H2O</text>
        <dbReference type="Rhea" id="RHEA:28202"/>
        <dbReference type="Rhea" id="RHEA-COMP:10002"/>
        <dbReference type="Rhea" id="RHEA-COMP:10004"/>
        <dbReference type="ChEBI" id="CHEBI:15377"/>
        <dbReference type="ChEBI" id="CHEBI:30616"/>
        <dbReference type="ChEBI" id="CHEBI:33722"/>
        <dbReference type="ChEBI" id="CHEBI:33723"/>
        <dbReference type="ChEBI" id="CHEBI:43474"/>
        <dbReference type="ChEBI" id="CHEBI:83348"/>
        <dbReference type="ChEBI" id="CHEBI:83350"/>
        <dbReference type="ChEBI" id="CHEBI:456216"/>
        <dbReference type="EC" id="1.3.7.7"/>
    </reaction>
</comment>
<comment type="cofactor">
    <cofactor evidence="1">
        <name>[4Fe-4S] cluster</name>
        <dbReference type="ChEBI" id="CHEBI:49883"/>
    </cofactor>
    <text evidence="1">Binds 1 [4Fe-4S] cluster per heterodimer. The cluster is bound at the heterodimer interface by residues from both subunits.</text>
</comment>
<comment type="pathway">
    <text evidence="1">Porphyrin-containing compound metabolism; chlorophyll biosynthesis (light-independent).</text>
</comment>
<comment type="subunit">
    <text evidence="1">Protochlorophyllide reductase is composed of three subunits; ChlL, ChlN and ChlB. Forms a heterotetramer of two ChlB and two ChlN subunits.</text>
</comment>
<comment type="subcellular location">
    <subcellularLocation>
        <location>Plastid</location>
        <location>Chloroplast</location>
    </subcellularLocation>
</comment>
<comment type="similarity">
    <text evidence="1">Belongs to the BchN/ChlN family.</text>
</comment>
<protein>
    <recommendedName>
        <fullName evidence="1">Light-independent protochlorophyllide reductase subunit N</fullName>
        <shortName evidence="1">DPOR subunit N</shortName>
        <shortName evidence="1">LI-POR subunit N</shortName>
        <ecNumber evidence="1">1.3.7.7</ecNumber>
    </recommendedName>
</protein>
<evidence type="ECO:0000255" key="1">
    <source>
        <dbReference type="HAMAP-Rule" id="MF_00352"/>
    </source>
</evidence>
<sequence>MSAKISETLTFECETGNYHTFCPISCVSWLYQKIEDSFFLMVGTKTCGYFLQNTLGVMIFAEPRYAMAELEEGDISAQLNDYEELKRLCIRIKKDRDPNVIIWIGTCTTEIIKMDLEGMAPKLESEIGIPIIVARANGLDHAFTQGEDTVLAAMAHRCLEQRLFVRERNGTIQKFPPPLEKEGEFIEYGDHPSLALFGSLPSNVASQLSPELRRQSVKVSGWLPAQRYTHLPSLGNGVYVCGINPFLSRTAATLVRRERCRLIGAPFPIGPDGTRAWIEKICPVFDIETQGLEEREKQIWESLKDYISLVHGKSVFFMGDNLLEISLARFLIRCGMIVYEIGIPYMDKRYQAAELALLRDTCIKMCVPIPRIVEKPDNYNQLRRIRELQPDLAITGMAHADPLEARGMNTKWSVEFTFAQIHGFANARNVLELVTRPLRCNDNLEDLGRTTLVK</sequence>
<name>CHLN_CYCTA</name>